<evidence type="ECO:0000250" key="1">
    <source>
        <dbReference type="UniProtKB" id="Q6Z4U4"/>
    </source>
</evidence>
<evidence type="ECO:0000255" key="2"/>
<evidence type="ECO:0000255" key="3">
    <source>
        <dbReference type="PROSITE-ProRule" id="PRU00159"/>
    </source>
</evidence>
<evidence type="ECO:0000255" key="4">
    <source>
        <dbReference type="PROSITE-ProRule" id="PRU00498"/>
    </source>
</evidence>
<evidence type="ECO:0000256" key="5">
    <source>
        <dbReference type="SAM" id="MobiDB-lite"/>
    </source>
</evidence>
<evidence type="ECO:0000303" key="6">
    <source>
    </source>
</evidence>
<evidence type="ECO:0000305" key="7"/>
<evidence type="ECO:0000312" key="8">
    <source>
        <dbReference type="EMBL" id="EEC82980.1"/>
    </source>
</evidence>
<comment type="function">
    <text evidence="1">LRR receptor kinase involved in defense response. Does not seem to be required specifically for XA21-mediated immunity or basal resistance to Xanthomonas oryzae pv. oryzae (Xoo), or immunity to Magnaporthe oryzae. Involved in brassinosteroid (BR) signaling pathway. Acts as a coreceptor of BRI1. Forms at the plasma membrane a receptor complex with BRI1 which is activated in response to brassinolide. Phosphorylates BRI1. Required for normal plant growth and leaf development. Possesses kinase activity in vitro.</text>
</comment>
<comment type="catalytic activity">
    <reaction evidence="7">
        <text>L-seryl-[protein] + ATP = O-phospho-L-seryl-[protein] + ADP + H(+)</text>
        <dbReference type="Rhea" id="RHEA:17989"/>
        <dbReference type="Rhea" id="RHEA-COMP:9863"/>
        <dbReference type="Rhea" id="RHEA-COMP:11604"/>
        <dbReference type="ChEBI" id="CHEBI:15378"/>
        <dbReference type="ChEBI" id="CHEBI:29999"/>
        <dbReference type="ChEBI" id="CHEBI:30616"/>
        <dbReference type="ChEBI" id="CHEBI:83421"/>
        <dbReference type="ChEBI" id="CHEBI:456216"/>
        <dbReference type="EC" id="2.7.11.1"/>
    </reaction>
</comment>
<comment type="catalytic activity">
    <reaction evidence="7">
        <text>L-threonyl-[protein] + ATP = O-phospho-L-threonyl-[protein] + ADP + H(+)</text>
        <dbReference type="Rhea" id="RHEA:46608"/>
        <dbReference type="Rhea" id="RHEA-COMP:11060"/>
        <dbReference type="Rhea" id="RHEA-COMP:11605"/>
        <dbReference type="ChEBI" id="CHEBI:15378"/>
        <dbReference type="ChEBI" id="CHEBI:30013"/>
        <dbReference type="ChEBI" id="CHEBI:30616"/>
        <dbReference type="ChEBI" id="CHEBI:61977"/>
        <dbReference type="ChEBI" id="CHEBI:456216"/>
        <dbReference type="EC" id="2.7.11.1"/>
    </reaction>
</comment>
<comment type="subunit">
    <text evidence="1">Forms homodimers. Interacts with BRI1. Interacts with REM4.1.</text>
</comment>
<comment type="subcellular location">
    <subcellularLocation>
        <location evidence="1">Cell membrane</location>
        <topology evidence="2">Single-pass membrane protein</topology>
    </subcellularLocation>
</comment>
<comment type="similarity">
    <text evidence="3">Belongs to the protein kinase superfamily. Ser/Thr protein kinase family.</text>
</comment>
<feature type="signal peptide" evidence="2">
    <location>
        <begin position="1"/>
        <end position="25"/>
    </location>
</feature>
<feature type="chain" id="PRO_5002868727" description="LRR receptor kinase BAK1" evidence="2">
    <location>
        <begin position="26"/>
        <end position="624"/>
    </location>
</feature>
<feature type="topological domain" description="Extracellular" evidence="7">
    <location>
        <begin position="26"/>
        <end position="237"/>
    </location>
</feature>
<feature type="transmembrane region" description="Helical" evidence="2">
    <location>
        <begin position="238"/>
        <end position="258"/>
    </location>
</feature>
<feature type="topological domain" description="Cytoplasmic" evidence="7">
    <location>
        <begin position="259"/>
        <end position="624"/>
    </location>
</feature>
<feature type="repeat" description="LRR 1" evidence="2">
    <location>
        <begin position="91"/>
        <end position="115"/>
    </location>
</feature>
<feature type="repeat" description="LRR 2" evidence="2">
    <location>
        <begin position="117"/>
        <end position="139"/>
    </location>
</feature>
<feature type="repeat" description="LRR 3" evidence="2">
    <location>
        <begin position="140"/>
        <end position="163"/>
    </location>
</feature>
<feature type="repeat" description="LRR 4" evidence="2">
    <location>
        <begin position="164"/>
        <end position="188"/>
    </location>
</feature>
<feature type="domain" description="Protein kinase" evidence="3">
    <location>
        <begin position="301"/>
        <end position="588"/>
    </location>
</feature>
<feature type="region of interest" description="Disordered" evidence="5">
    <location>
        <begin position="205"/>
        <end position="236"/>
    </location>
</feature>
<feature type="compositionally biased region" description="Pro residues" evidence="5">
    <location>
        <begin position="210"/>
        <end position="227"/>
    </location>
</feature>
<feature type="active site" description="Proton acceptor" evidence="3">
    <location>
        <position position="428"/>
    </location>
</feature>
<feature type="binding site" evidence="3">
    <location>
        <begin position="307"/>
        <end position="315"/>
    </location>
    <ligand>
        <name>ATP</name>
        <dbReference type="ChEBI" id="CHEBI:30616"/>
    </ligand>
</feature>
<feature type="binding site" evidence="3">
    <location>
        <position position="329"/>
    </location>
    <ligand>
        <name>ATP</name>
        <dbReference type="ChEBI" id="CHEBI:30616"/>
    </ligand>
</feature>
<feature type="glycosylation site" description="N-linked (GlcNAc...) asparagine" evidence="4">
    <location>
        <position position="103"/>
    </location>
</feature>
<feature type="glycosylation site" description="N-linked (GlcNAc...) asparagine" evidence="4">
    <location>
        <position position="114"/>
    </location>
</feature>
<feature type="glycosylation site" description="N-linked (GlcNAc...) asparagine" evidence="4">
    <location>
        <position position="127"/>
    </location>
</feature>
<feature type="glycosylation site" description="N-linked (GlcNAc...) asparagine" evidence="4">
    <location>
        <position position="149"/>
    </location>
</feature>
<feature type="glycosylation site" description="N-linked (GlcNAc...) asparagine" evidence="4">
    <location>
        <position position="175"/>
    </location>
</feature>
<feature type="sequence conflict" description="In Ref. 1; AAR26543." evidence="7" ref="1">
    <original>P</original>
    <variation>H</variation>
    <location>
        <position position="4"/>
    </location>
</feature>
<feature type="sequence conflict" description="In Ref. 1; AAR26543." evidence="7" ref="1">
    <original>STGS</original>
    <variation>YKHG</variation>
    <location>
        <begin position="182"/>
        <end position="185"/>
    </location>
</feature>
<name>BAK1_ORYSI</name>
<organism>
    <name type="scientific">Oryza sativa subsp. indica</name>
    <name type="common">Rice</name>
    <dbReference type="NCBI Taxonomy" id="39946"/>
    <lineage>
        <taxon>Eukaryota</taxon>
        <taxon>Viridiplantae</taxon>
        <taxon>Streptophyta</taxon>
        <taxon>Embryophyta</taxon>
        <taxon>Tracheophyta</taxon>
        <taxon>Spermatophyta</taxon>
        <taxon>Magnoliopsida</taxon>
        <taxon>Liliopsida</taxon>
        <taxon>Poales</taxon>
        <taxon>Poaceae</taxon>
        <taxon>BOP clade</taxon>
        <taxon>Oryzoideae</taxon>
        <taxon>Oryzeae</taxon>
        <taxon>Oryzinae</taxon>
        <taxon>Oryza</taxon>
        <taxon>Oryza sativa</taxon>
    </lineage>
</organism>
<sequence length="624" mass="68662">MAAPRWAVWAVLLLRLLVPAARVLANMEGDALHSLRTNLVDPNNVLQSWDPTLVNPCTWFHVTCNNDNSVIRVDLGNAALSGTLVPQLGQLKNLQYLELYSNNISGTIPSELGNLTNLVSLDLYLNNFTGPIPDSLGNLLKLRFLRLNNNSLSGSIPKSLTAITALQVLDLSNNNLSGEVPSTGSFSLFTPISFANNPSLCGPGTTKPCPGAPPFSPPPPYNPPTPVQSPGSSSSTGAIAGGVAAGAALLFAIPAIGFAWYRRRKPQEHFFDVPAEEDPEVHLGQLKRFSLRELQVATDTFSNKNILGRGGFGKVYKGRLADGSLVAVKRLKEERTPGGELQFQTEVEMISMAVHRNLLRLRGFCMTPTERLLVYPYMANGSVASRLRERPPSEPPLDWRTRRRIALGSARGLSYLHDHCDPKIIHRDVKAANILLDEDFEAVVGDFGLAKLMDYKDTHVTTAVRGTIGHIAPEYLSTGKSSEKTDVFGYGIMLLELITGQRAFDLARLANDDDVMLLDWVKGLLKEKRLEMLVDPDLQSNYIDVEVESLIQVALLCTQGSPTERPKMAEVVRMLEGDGLAERWEEWQKIEVVRQEVELGPHRNSEWIVDSTDNLHAVELSGPR</sequence>
<protein>
    <recommendedName>
        <fullName evidence="7">LRR receptor kinase BAK1</fullName>
        <ecNumber evidence="7">2.7.11.1</ecNumber>
    </recommendedName>
    <alternativeName>
        <fullName evidence="7">BRI1-associated receptor kinase 1 homolog</fullName>
    </alternativeName>
    <alternativeName>
        <fullName evidence="7">Benzothiadiazole-induced SERK1</fullName>
    </alternativeName>
    <alternativeName>
        <fullName evidence="7">Somatic embryogenesis receptor kinase 1</fullName>
    </alternativeName>
</protein>
<reference key="1">
    <citation type="journal article" date="2008" name="Mol. Biol. Rep.">
        <title>Molecular characterization and expression analysis of OsBISERK1, a gene encoding a leucine-rich repeat receptor-like kinase, during disease resistance responses in rice.</title>
        <authorList>
            <person name="Song D."/>
            <person name="Li G."/>
            <person name="Song F."/>
            <person name="Zheng Z."/>
        </authorList>
    </citation>
    <scope>NUCLEOTIDE SEQUENCE [MRNA]</scope>
    <source>
        <strain>cv. Yuanfengzao</strain>
    </source>
</reference>
<reference key="2">
    <citation type="journal article" date="2005" name="PLoS Biol.">
        <title>The genomes of Oryza sativa: a history of duplications.</title>
        <authorList>
            <person name="Yu J."/>
            <person name="Wang J."/>
            <person name="Lin W."/>
            <person name="Li S."/>
            <person name="Li H."/>
            <person name="Zhou J."/>
            <person name="Ni P."/>
            <person name="Dong W."/>
            <person name="Hu S."/>
            <person name="Zeng C."/>
            <person name="Zhang J."/>
            <person name="Zhang Y."/>
            <person name="Li R."/>
            <person name="Xu Z."/>
            <person name="Li S."/>
            <person name="Li X."/>
            <person name="Zheng H."/>
            <person name="Cong L."/>
            <person name="Lin L."/>
            <person name="Yin J."/>
            <person name="Geng J."/>
            <person name="Li G."/>
            <person name="Shi J."/>
            <person name="Liu J."/>
            <person name="Lv H."/>
            <person name="Li J."/>
            <person name="Wang J."/>
            <person name="Deng Y."/>
            <person name="Ran L."/>
            <person name="Shi X."/>
            <person name="Wang X."/>
            <person name="Wu Q."/>
            <person name="Li C."/>
            <person name="Ren X."/>
            <person name="Wang J."/>
            <person name="Wang X."/>
            <person name="Li D."/>
            <person name="Liu D."/>
            <person name="Zhang X."/>
            <person name="Ji Z."/>
            <person name="Zhao W."/>
            <person name="Sun Y."/>
            <person name="Zhang Z."/>
            <person name="Bao J."/>
            <person name="Han Y."/>
            <person name="Dong L."/>
            <person name="Ji J."/>
            <person name="Chen P."/>
            <person name="Wu S."/>
            <person name="Liu J."/>
            <person name="Xiao Y."/>
            <person name="Bu D."/>
            <person name="Tan J."/>
            <person name="Yang L."/>
            <person name="Ye C."/>
            <person name="Zhang J."/>
            <person name="Xu J."/>
            <person name="Zhou Y."/>
            <person name="Yu Y."/>
            <person name="Zhang B."/>
            <person name="Zhuang S."/>
            <person name="Wei H."/>
            <person name="Liu B."/>
            <person name="Lei M."/>
            <person name="Yu H."/>
            <person name="Li Y."/>
            <person name="Xu H."/>
            <person name="Wei S."/>
            <person name="He X."/>
            <person name="Fang L."/>
            <person name="Zhang Z."/>
            <person name="Zhang Y."/>
            <person name="Huang X."/>
            <person name="Su Z."/>
            <person name="Tong W."/>
            <person name="Li J."/>
            <person name="Tong Z."/>
            <person name="Li S."/>
            <person name="Ye J."/>
            <person name="Wang L."/>
            <person name="Fang L."/>
            <person name="Lei T."/>
            <person name="Chen C.-S."/>
            <person name="Chen H.-C."/>
            <person name="Xu Z."/>
            <person name="Li H."/>
            <person name="Huang H."/>
            <person name="Zhang F."/>
            <person name="Xu H."/>
            <person name="Li N."/>
            <person name="Zhao C."/>
            <person name="Li S."/>
            <person name="Dong L."/>
            <person name="Huang Y."/>
            <person name="Li L."/>
            <person name="Xi Y."/>
            <person name="Qi Q."/>
            <person name="Li W."/>
            <person name="Zhang B."/>
            <person name="Hu W."/>
            <person name="Zhang Y."/>
            <person name="Tian X."/>
            <person name="Jiao Y."/>
            <person name="Liang X."/>
            <person name="Jin J."/>
            <person name="Gao L."/>
            <person name="Zheng W."/>
            <person name="Hao B."/>
            <person name="Liu S.-M."/>
            <person name="Wang W."/>
            <person name="Yuan L."/>
            <person name="Cao M."/>
            <person name="McDermott J."/>
            <person name="Samudrala R."/>
            <person name="Wang J."/>
            <person name="Wong G.K.-S."/>
            <person name="Yang H."/>
        </authorList>
    </citation>
    <scope>NUCLEOTIDE SEQUENCE [LARGE SCALE GENOMIC DNA]</scope>
    <source>
        <strain>cv. 93-11</strain>
    </source>
</reference>
<accession>B8BB68</accession>
<accession>Q6S7F1</accession>
<keyword id="KW-0067">ATP-binding</keyword>
<keyword id="KW-1003">Cell membrane</keyword>
<keyword id="KW-0325">Glycoprotein</keyword>
<keyword id="KW-0418">Kinase</keyword>
<keyword id="KW-0433">Leucine-rich repeat</keyword>
<keyword id="KW-0472">Membrane</keyword>
<keyword id="KW-0547">Nucleotide-binding</keyword>
<keyword id="KW-0675">Receptor</keyword>
<keyword id="KW-1185">Reference proteome</keyword>
<keyword id="KW-0677">Repeat</keyword>
<keyword id="KW-0723">Serine/threonine-protein kinase</keyword>
<keyword id="KW-0732">Signal</keyword>
<keyword id="KW-0808">Transferase</keyword>
<keyword id="KW-0812">Transmembrane</keyword>
<keyword id="KW-1133">Transmembrane helix</keyword>
<proteinExistence type="evidence at transcript level"/>
<gene>
    <name evidence="7" type="primary">BAK1</name>
    <name evidence="6" type="synonym">BISERK1</name>
    <name evidence="7" type="synonym">SERK1</name>
    <name evidence="8" type="ORF">OsI_28003</name>
</gene>
<dbReference type="EC" id="2.7.11.1" evidence="7"/>
<dbReference type="EMBL" id="AY463361">
    <property type="protein sequence ID" value="AAR26543.1"/>
    <property type="molecule type" value="mRNA"/>
</dbReference>
<dbReference type="EMBL" id="CM000133">
    <property type="protein sequence ID" value="EEC82980.1"/>
    <property type="molecule type" value="Genomic_DNA"/>
</dbReference>
<dbReference type="SMR" id="B8BB68"/>
<dbReference type="STRING" id="39946.B8BB68"/>
<dbReference type="GlyCosmos" id="B8BB68">
    <property type="glycosylation" value="5 sites, No reported glycans"/>
</dbReference>
<dbReference type="EnsemblPlants" id="BGIOSGA028076-TA">
    <property type="protein sequence ID" value="BGIOSGA028076-PA"/>
    <property type="gene ID" value="BGIOSGA028076"/>
</dbReference>
<dbReference type="EnsemblPlants" id="OsGoSa_08g0004680.01">
    <property type="protein sequence ID" value="OsGoSa_08g0004680.01"/>
    <property type="gene ID" value="OsGoSa_08g0004680"/>
</dbReference>
<dbReference type="EnsemblPlants" id="OsLima_08g0004810.01">
    <property type="protein sequence ID" value="OsLima_08g0004810.01"/>
    <property type="gene ID" value="OsLima_08g0004810"/>
</dbReference>
<dbReference type="EnsemblPlants" id="OsLiXu_08g0004960.01">
    <property type="protein sequence ID" value="OsLiXu_08g0004960.01"/>
    <property type="gene ID" value="OsLiXu_08g0004960"/>
</dbReference>
<dbReference type="EnsemblPlants" id="OsMH63_08G004890_01">
    <property type="protein sequence ID" value="OsMH63_08G004890_01"/>
    <property type="gene ID" value="OsMH63_08G004890"/>
</dbReference>
<dbReference type="EnsemblPlants" id="OsPr106_08g0004860.01">
    <property type="protein sequence ID" value="OsPr106_08g0004860.01"/>
    <property type="gene ID" value="OsPr106_08g0004860"/>
</dbReference>
<dbReference type="EnsemblPlants" id="OsZS97_08G004900_01">
    <property type="protein sequence ID" value="OsZS97_08G004900_01"/>
    <property type="gene ID" value="OsZS97_08G004900"/>
</dbReference>
<dbReference type="Gramene" id="BGIOSGA028076-TA">
    <property type="protein sequence ID" value="BGIOSGA028076-PA"/>
    <property type="gene ID" value="BGIOSGA028076"/>
</dbReference>
<dbReference type="Gramene" id="OsGoSa_08g0004680.01">
    <property type="protein sequence ID" value="OsGoSa_08g0004680.01"/>
    <property type="gene ID" value="OsGoSa_08g0004680"/>
</dbReference>
<dbReference type="Gramene" id="OsLima_08g0004810.01">
    <property type="protein sequence ID" value="OsLima_08g0004810.01"/>
    <property type="gene ID" value="OsLima_08g0004810"/>
</dbReference>
<dbReference type="Gramene" id="OsLiXu_08g0004960.01">
    <property type="protein sequence ID" value="OsLiXu_08g0004960.01"/>
    <property type="gene ID" value="OsLiXu_08g0004960"/>
</dbReference>
<dbReference type="Gramene" id="OsMH63_08G004890_01">
    <property type="protein sequence ID" value="OsMH63_08G004890_01"/>
    <property type="gene ID" value="OsMH63_08G004890"/>
</dbReference>
<dbReference type="Gramene" id="OsPr106_08g0004860.01">
    <property type="protein sequence ID" value="OsPr106_08g0004860.01"/>
    <property type="gene ID" value="OsPr106_08g0004860"/>
</dbReference>
<dbReference type="Gramene" id="OsZS97_08G004900_01">
    <property type="protein sequence ID" value="OsZS97_08G004900_01"/>
    <property type="gene ID" value="OsZS97_08G004900"/>
</dbReference>
<dbReference type="HOGENOM" id="CLU_000288_92_7_1"/>
<dbReference type="OMA" id="WYRKKHG"/>
<dbReference type="OrthoDB" id="4062651at2759"/>
<dbReference type="PlantReactome" id="R-OSA-5632095">
    <property type="pathway name" value="Brassinosteroid signaling"/>
</dbReference>
<dbReference type="PlantReactome" id="R-OSA-9035605">
    <property type="pathway name" value="Regulation of seed size"/>
</dbReference>
<dbReference type="Proteomes" id="UP000007015">
    <property type="component" value="Chromosome 8"/>
</dbReference>
<dbReference type="GO" id="GO:0005886">
    <property type="term" value="C:plasma membrane"/>
    <property type="evidence" value="ECO:0007669"/>
    <property type="project" value="UniProtKB-SubCell"/>
</dbReference>
<dbReference type="GO" id="GO:0005524">
    <property type="term" value="F:ATP binding"/>
    <property type="evidence" value="ECO:0007669"/>
    <property type="project" value="UniProtKB-KW"/>
</dbReference>
<dbReference type="GO" id="GO:0042803">
    <property type="term" value="F:protein homodimerization activity"/>
    <property type="evidence" value="ECO:0007669"/>
    <property type="project" value="EnsemblPlants"/>
</dbReference>
<dbReference type="GO" id="GO:0106310">
    <property type="term" value="F:protein serine kinase activity"/>
    <property type="evidence" value="ECO:0007669"/>
    <property type="project" value="RHEA"/>
</dbReference>
<dbReference type="GO" id="GO:0004674">
    <property type="term" value="F:protein serine/threonine kinase activity"/>
    <property type="evidence" value="ECO:0007669"/>
    <property type="project" value="UniProtKB-KW"/>
</dbReference>
<dbReference type="GO" id="GO:0009742">
    <property type="term" value="P:brassinosteroid mediated signaling pathway"/>
    <property type="evidence" value="ECO:0007669"/>
    <property type="project" value="EnsemblPlants"/>
</dbReference>
<dbReference type="FunFam" id="3.30.200.20:FF:000015">
    <property type="entry name" value="Somatic embryogenesis receptor kinase 1"/>
    <property type="match status" value="1"/>
</dbReference>
<dbReference type="FunFam" id="3.80.10.10:FF:000024">
    <property type="entry name" value="Somatic embryogenesis receptor kinase 1"/>
    <property type="match status" value="1"/>
</dbReference>
<dbReference type="FunFam" id="1.10.510.10:FF:000016">
    <property type="entry name" value="Somatic embryogenesis receptor-like kinase 1"/>
    <property type="match status" value="1"/>
</dbReference>
<dbReference type="Gene3D" id="3.30.200.20">
    <property type="entry name" value="Phosphorylase Kinase, domain 1"/>
    <property type="match status" value="1"/>
</dbReference>
<dbReference type="Gene3D" id="3.80.10.10">
    <property type="entry name" value="Ribonuclease Inhibitor"/>
    <property type="match status" value="1"/>
</dbReference>
<dbReference type="Gene3D" id="1.20.5.510">
    <property type="entry name" value="Single helix bin"/>
    <property type="match status" value="1"/>
</dbReference>
<dbReference type="Gene3D" id="1.10.510.10">
    <property type="entry name" value="Transferase(Phosphotransferase) domain 1"/>
    <property type="match status" value="1"/>
</dbReference>
<dbReference type="InterPro" id="IPR011009">
    <property type="entry name" value="Kinase-like_dom_sf"/>
</dbReference>
<dbReference type="InterPro" id="IPR001611">
    <property type="entry name" value="Leu-rich_rpt"/>
</dbReference>
<dbReference type="InterPro" id="IPR032675">
    <property type="entry name" value="LRR_dom_sf"/>
</dbReference>
<dbReference type="InterPro" id="IPR013210">
    <property type="entry name" value="LRR_N_plant-typ"/>
</dbReference>
<dbReference type="InterPro" id="IPR000719">
    <property type="entry name" value="Prot_kinase_dom"/>
</dbReference>
<dbReference type="InterPro" id="IPR017441">
    <property type="entry name" value="Protein_kinase_ATP_BS"/>
</dbReference>
<dbReference type="InterPro" id="IPR001245">
    <property type="entry name" value="Ser-Thr/Tyr_kinase_cat_dom"/>
</dbReference>
<dbReference type="InterPro" id="IPR008271">
    <property type="entry name" value="Ser/Thr_kinase_AS"/>
</dbReference>
<dbReference type="PANTHER" id="PTHR47988">
    <property type="entry name" value="SOMATIC EMBRYOGENESIS RECEPTOR KINASE 1"/>
    <property type="match status" value="1"/>
</dbReference>
<dbReference type="Pfam" id="PF00560">
    <property type="entry name" value="LRR_1"/>
    <property type="match status" value="4"/>
</dbReference>
<dbReference type="Pfam" id="PF08263">
    <property type="entry name" value="LRRNT_2"/>
    <property type="match status" value="1"/>
</dbReference>
<dbReference type="Pfam" id="PF07714">
    <property type="entry name" value="PK_Tyr_Ser-Thr"/>
    <property type="match status" value="1"/>
</dbReference>
<dbReference type="SMART" id="SM00220">
    <property type="entry name" value="S_TKc"/>
    <property type="match status" value="1"/>
</dbReference>
<dbReference type="SUPFAM" id="SSF52058">
    <property type="entry name" value="L domain-like"/>
    <property type="match status" value="1"/>
</dbReference>
<dbReference type="SUPFAM" id="SSF56112">
    <property type="entry name" value="Protein kinase-like (PK-like)"/>
    <property type="match status" value="1"/>
</dbReference>
<dbReference type="PROSITE" id="PS00107">
    <property type="entry name" value="PROTEIN_KINASE_ATP"/>
    <property type="match status" value="1"/>
</dbReference>
<dbReference type="PROSITE" id="PS50011">
    <property type="entry name" value="PROTEIN_KINASE_DOM"/>
    <property type="match status" value="1"/>
</dbReference>
<dbReference type="PROSITE" id="PS00108">
    <property type="entry name" value="PROTEIN_KINASE_ST"/>
    <property type="match status" value="1"/>
</dbReference>